<feature type="chain" id="PRO_0000040219" description="RNA-directed RNA polymerase">
    <location>
        <begin position="1"/>
        <end position="725"/>
    </location>
</feature>
<feature type="chain" id="PRO_0000040220" description="Protein p23">
    <location>
        <begin position="1"/>
        <end position="202"/>
    </location>
</feature>
<feature type="domain" description="RdRp catalytic" evidence="1">
    <location>
        <begin position="424"/>
        <end position="544"/>
    </location>
</feature>
<name>RDRP_TNVD</name>
<sequence>MESLPIVLLSLISKAVVLICSLLTLIIQNSTAVTWGLACVWLAYVSFRFLFQVKITVHPAARETFESMVRKFQAESMFSEEATPCIVSVGDKDADLTPDPQREDIKIVKSSRRVSYAVRVAHVAKAQVGLLANSRANELVYSRLCREEMVKHGVRPSHIAHMVPLAVAACFIPLDSDFLAASIRQGEGMRERRALLGPSWEKXGGLLVTSGFTTPTWRGDPRGMLVTKGPPLAKPRKLYRFTGMGTHIRYGVHDHSLGNVRRGLVERLYMVEVKGELQPTPKPTPGAFNQMSRFSDRLSIHLPKTTRLTPREFLGFYTGRKLERYQKAVESLEMHPVREKDAWLSTFVKAEKLNITAKPDPAPRVIQPRDPRYNVEVGRFLRHSEEMLFKAINKTFGGRTIFKGLSSDQAGEEFKTLWDSFKDPVGIGMDASRFDQHISKDALEFEHKMWLSMFPKSERAELARLLSWQINNRGLARCPDGEIRYRVEGCRMSGDMNTSSGNCYIMCATVHNWCDNIKHIKHFRLANNGDDCMLVVERSDEKKVRNGLIEYYATLGFTMKVEPTVDVLERLEFCQTRPVLVDGKYRMVRNLHQSMSKDLHSLHDLDSSAARNAWVTAVGTGGRCMNDGVPVLKEFFKQFPDYNLEVKKGSDMAQKLRDDWKYKFNRTAAFQDLIPTQESRYSFWLAFGLLPDEQIALENGFSPLKMEIVNEQIQEETSLLQFSGA</sequence>
<organismHost>
    <name type="scientific">Chenopodium amaranticolor</name>
    <dbReference type="NCBI Taxonomy" id="66262"/>
</organismHost>
<organismHost>
    <name type="scientific">Chenopodium quinoa</name>
    <name type="common">Quinoa</name>
    <dbReference type="NCBI Taxonomy" id="63459"/>
</organismHost>
<organismHost>
    <name type="scientific">Cucumis sativus</name>
    <name type="common">Cucumber</name>
    <dbReference type="NCBI Taxonomy" id="3659"/>
</organismHost>
<organismHost>
    <name type="scientific">Nicotiana clevelandii</name>
    <name type="common">Wild tobacco</name>
    <dbReference type="NCBI Taxonomy" id="81866"/>
</organismHost>
<organismHost>
    <name type="scientific">Nicotiana tabacum</name>
    <name type="common">Common tobacco</name>
    <dbReference type="NCBI Taxonomy" id="4097"/>
</organismHost>
<organismHost>
    <name type="scientific">Phaseolus vulgaris</name>
    <name type="common">Kidney bean</name>
    <name type="synonym">French bean</name>
    <dbReference type="NCBI Taxonomy" id="3885"/>
</organismHost>
<organismHost>
    <name type="scientific">Tulipa gesneriana</name>
    <name type="common">Garden tulip</name>
    <dbReference type="NCBI Taxonomy" id="13306"/>
</organismHost>
<organism>
    <name type="scientific">Tobacco necrosis virus (strain D)</name>
    <name type="common">TNV-D</name>
    <dbReference type="NCBI Taxonomy" id="12056"/>
    <lineage>
        <taxon>Viruses</taxon>
        <taxon>Riboviria</taxon>
        <taxon>Orthornavirae</taxon>
        <taxon>Kitrinoviricota</taxon>
        <taxon>Tolucaviricetes</taxon>
        <taxon>Tolivirales</taxon>
        <taxon>Tombusviridae</taxon>
        <taxon>Procedovirinae</taxon>
        <taxon>Betanecrovirus</taxon>
        <taxon>Betanecrovirus nicotianae</taxon>
    </lineage>
</organism>
<gene>
    <name type="ORF">ORF1</name>
</gene>
<keyword id="KW-0547">Nucleotide-binding</keyword>
<keyword id="KW-0548">Nucleotidyltransferase</keyword>
<keyword id="KW-1159">RNA suppression of termination</keyword>
<keyword id="KW-0696">RNA-directed RNA polymerase</keyword>
<keyword id="KW-0808">Transferase</keyword>
<keyword id="KW-0693">Viral RNA replication</keyword>
<reference key="1">
    <citation type="journal article" date="1991" name="J. Gen. Virol.">
        <title>The complete nucleotide sequence of tobacco necrosis virus strain D.</title>
        <authorList>
            <person name="Coutts R.H.A."/>
            <person name="Rigden J.E."/>
            <person name="Slabas A.R."/>
            <person name="Lomonossoff G.P."/>
            <person name="Wise P.J."/>
        </authorList>
    </citation>
    <scope>NUCLEOTIDE SEQUENCE [GENOMIC RNA]</scope>
</reference>
<reference key="2">
    <citation type="submission" date="1996-04" db="EMBL/GenBank/DDBJ databases">
        <authorList>
            <person name="Coutts R.H.A."/>
        </authorList>
    </citation>
    <scope>SEQUENCE REVISION</scope>
</reference>
<proteinExistence type="inferred from homology"/>
<accession>P27209</accession>
<dbReference type="EC" id="2.7.7.48"/>
<dbReference type="EMBL" id="D00942">
    <property type="protein sequence ID" value="BAA00785.1"/>
    <property type="molecule type" value="Genomic_RNA"/>
</dbReference>
<dbReference type="EMBL" id="D00942">
    <property type="protein sequence ID" value="BAA00786.1"/>
    <property type="molecule type" value="Genomic_RNA"/>
</dbReference>
<dbReference type="PIR" id="JU0368">
    <property type="entry name" value="RRWQTD"/>
</dbReference>
<dbReference type="GO" id="GO:0000166">
    <property type="term" value="F:nucleotide binding"/>
    <property type="evidence" value="ECO:0007669"/>
    <property type="project" value="UniProtKB-KW"/>
</dbReference>
<dbReference type="GO" id="GO:0003723">
    <property type="term" value="F:RNA binding"/>
    <property type="evidence" value="ECO:0007669"/>
    <property type="project" value="InterPro"/>
</dbReference>
<dbReference type="GO" id="GO:0003968">
    <property type="term" value="F:RNA-directed RNA polymerase activity"/>
    <property type="evidence" value="ECO:0007669"/>
    <property type="project" value="UniProtKB-KW"/>
</dbReference>
<dbReference type="GO" id="GO:0039694">
    <property type="term" value="P:viral RNA genome replication"/>
    <property type="evidence" value="ECO:0007669"/>
    <property type="project" value="InterPro"/>
</dbReference>
<dbReference type="CDD" id="cd23244">
    <property type="entry name" value="Betanecrovirus_RdRp"/>
    <property type="match status" value="1"/>
</dbReference>
<dbReference type="Gene3D" id="3.30.70.270">
    <property type="match status" value="1"/>
</dbReference>
<dbReference type="InterPro" id="IPR043502">
    <property type="entry name" value="DNA/RNA_pol_sf"/>
</dbReference>
<dbReference type="InterPro" id="IPR043128">
    <property type="entry name" value="Rev_trsase/Diguanyl_cyclase"/>
</dbReference>
<dbReference type="InterPro" id="IPR007094">
    <property type="entry name" value="RNA-dir_pol_PSvirus"/>
</dbReference>
<dbReference type="InterPro" id="IPR002166">
    <property type="entry name" value="RNA_pol_HCV"/>
</dbReference>
<dbReference type="InterPro" id="IPR013707">
    <property type="entry name" value="Tombusvirus_p33"/>
</dbReference>
<dbReference type="Pfam" id="PF00998">
    <property type="entry name" value="RdRP_3"/>
    <property type="match status" value="1"/>
</dbReference>
<dbReference type="Pfam" id="PF08500">
    <property type="entry name" value="Tombus_P33"/>
    <property type="match status" value="1"/>
</dbReference>
<dbReference type="SUPFAM" id="SSF56672">
    <property type="entry name" value="DNA/RNA polymerases"/>
    <property type="match status" value="1"/>
</dbReference>
<dbReference type="PROSITE" id="PS50507">
    <property type="entry name" value="RDRP_SSRNA_POS"/>
    <property type="match status" value="1"/>
</dbReference>
<evidence type="ECO:0000255" key="1">
    <source>
        <dbReference type="PROSITE-ProRule" id="PRU00539"/>
    </source>
</evidence>
<evidence type="ECO:0000305" key="2"/>
<protein>
    <recommendedName>
        <fullName>RNA-directed RNA polymerase</fullName>
        <ecNumber>2.7.7.48</ecNumber>
    </recommendedName>
    <alternativeName>
        <fullName>Protein p82</fullName>
    </alternativeName>
    <component>
        <recommendedName>
            <fullName>Protein p23</fullName>
        </recommendedName>
    </component>
</protein>
<comment type="function">
    <text evidence="2">RNA-dependent RNA polymerase that plays an essential role in the virus replication.</text>
</comment>
<comment type="catalytic activity">
    <reaction evidence="1">
        <text>RNA(n) + a ribonucleoside 5'-triphosphate = RNA(n+1) + diphosphate</text>
        <dbReference type="Rhea" id="RHEA:21248"/>
        <dbReference type="Rhea" id="RHEA-COMP:14527"/>
        <dbReference type="Rhea" id="RHEA-COMP:17342"/>
        <dbReference type="ChEBI" id="CHEBI:33019"/>
        <dbReference type="ChEBI" id="CHEBI:61557"/>
        <dbReference type="ChEBI" id="CHEBI:140395"/>
        <dbReference type="EC" id="2.7.7.48"/>
    </reaction>
</comment>
<comment type="miscellaneous">
    <text>Readthrough of the terminator UAG occurs at position 203.</text>
</comment>
<comment type="similarity">
    <text evidence="2">Belongs to the tombusviridae RNA polymerase family.</text>
</comment>